<reference key="1">
    <citation type="journal article" date="2008" name="Genome Res.">
        <title>Comparative genome analysis of Salmonella enteritidis PT4 and Salmonella gallinarum 287/91 provides insights into evolutionary and host adaptation pathways.</title>
        <authorList>
            <person name="Thomson N.R."/>
            <person name="Clayton D.J."/>
            <person name="Windhorst D."/>
            <person name="Vernikos G."/>
            <person name="Davidson S."/>
            <person name="Churcher C."/>
            <person name="Quail M.A."/>
            <person name="Stevens M."/>
            <person name="Jones M.A."/>
            <person name="Watson M."/>
            <person name="Barron A."/>
            <person name="Layton A."/>
            <person name="Pickard D."/>
            <person name="Kingsley R.A."/>
            <person name="Bignell A."/>
            <person name="Clark L."/>
            <person name="Harris B."/>
            <person name="Ormond D."/>
            <person name="Abdellah Z."/>
            <person name="Brooks K."/>
            <person name="Cherevach I."/>
            <person name="Chillingworth T."/>
            <person name="Woodward J."/>
            <person name="Norberczak H."/>
            <person name="Lord A."/>
            <person name="Arrowsmith C."/>
            <person name="Jagels K."/>
            <person name="Moule S."/>
            <person name="Mungall K."/>
            <person name="Saunders M."/>
            <person name="Whitehead S."/>
            <person name="Chabalgoity J.A."/>
            <person name="Maskell D."/>
            <person name="Humphreys T."/>
            <person name="Roberts M."/>
            <person name="Barrow P.A."/>
            <person name="Dougan G."/>
            <person name="Parkhill J."/>
        </authorList>
    </citation>
    <scope>NUCLEOTIDE SEQUENCE [LARGE SCALE GENOMIC DNA]</scope>
    <source>
        <strain>P125109</strain>
    </source>
</reference>
<feature type="chain" id="PRO_1000143844" description="Large ribosomal subunit protein bL21">
    <location>
        <begin position="1"/>
        <end position="103"/>
    </location>
</feature>
<protein>
    <recommendedName>
        <fullName evidence="1">Large ribosomal subunit protein bL21</fullName>
    </recommendedName>
    <alternativeName>
        <fullName evidence="2">50S ribosomal protein L21</fullName>
    </alternativeName>
</protein>
<name>RL21_SALEP</name>
<comment type="function">
    <text evidence="1">This protein binds to 23S rRNA in the presence of protein L20.</text>
</comment>
<comment type="subunit">
    <text evidence="1">Part of the 50S ribosomal subunit. Contacts protein L20.</text>
</comment>
<comment type="similarity">
    <text evidence="1">Belongs to the bacterial ribosomal protein bL21 family.</text>
</comment>
<evidence type="ECO:0000255" key="1">
    <source>
        <dbReference type="HAMAP-Rule" id="MF_01363"/>
    </source>
</evidence>
<evidence type="ECO:0000305" key="2"/>
<organism>
    <name type="scientific">Salmonella enteritidis PT4 (strain P125109)</name>
    <dbReference type="NCBI Taxonomy" id="550537"/>
    <lineage>
        <taxon>Bacteria</taxon>
        <taxon>Pseudomonadati</taxon>
        <taxon>Pseudomonadota</taxon>
        <taxon>Gammaproteobacteria</taxon>
        <taxon>Enterobacterales</taxon>
        <taxon>Enterobacteriaceae</taxon>
        <taxon>Salmonella</taxon>
    </lineage>
</organism>
<proteinExistence type="inferred from homology"/>
<sequence length="103" mass="11578">MYAVFQSGGKQHRVSEGQTVRLEKLDIATGETIEFAEVLMIANGEEVKIGVPFVDGGVIKAEVVAHGRGEKVKIVKFRRRKHYRKQQGHRQWFTDVKITGISA</sequence>
<dbReference type="EMBL" id="AM933172">
    <property type="protein sequence ID" value="CAR34713.1"/>
    <property type="molecule type" value="Genomic_DNA"/>
</dbReference>
<dbReference type="RefSeq" id="WP_000271396.1">
    <property type="nucleotide sequence ID" value="NC_011294.1"/>
</dbReference>
<dbReference type="SMR" id="B5R0H7"/>
<dbReference type="GeneID" id="66757643"/>
<dbReference type="KEGG" id="set:SEN3137"/>
<dbReference type="HOGENOM" id="CLU_061463_3_3_6"/>
<dbReference type="Proteomes" id="UP000000613">
    <property type="component" value="Chromosome"/>
</dbReference>
<dbReference type="GO" id="GO:0005737">
    <property type="term" value="C:cytoplasm"/>
    <property type="evidence" value="ECO:0007669"/>
    <property type="project" value="UniProtKB-ARBA"/>
</dbReference>
<dbReference type="GO" id="GO:1990904">
    <property type="term" value="C:ribonucleoprotein complex"/>
    <property type="evidence" value="ECO:0007669"/>
    <property type="project" value="UniProtKB-KW"/>
</dbReference>
<dbReference type="GO" id="GO:0005840">
    <property type="term" value="C:ribosome"/>
    <property type="evidence" value="ECO:0007669"/>
    <property type="project" value="UniProtKB-KW"/>
</dbReference>
<dbReference type="GO" id="GO:0019843">
    <property type="term" value="F:rRNA binding"/>
    <property type="evidence" value="ECO:0007669"/>
    <property type="project" value="UniProtKB-UniRule"/>
</dbReference>
<dbReference type="GO" id="GO:0003735">
    <property type="term" value="F:structural constituent of ribosome"/>
    <property type="evidence" value="ECO:0007669"/>
    <property type="project" value="InterPro"/>
</dbReference>
<dbReference type="GO" id="GO:0006412">
    <property type="term" value="P:translation"/>
    <property type="evidence" value="ECO:0007669"/>
    <property type="project" value="UniProtKB-UniRule"/>
</dbReference>
<dbReference type="HAMAP" id="MF_01363">
    <property type="entry name" value="Ribosomal_bL21"/>
    <property type="match status" value="1"/>
</dbReference>
<dbReference type="InterPro" id="IPR028909">
    <property type="entry name" value="bL21-like"/>
</dbReference>
<dbReference type="InterPro" id="IPR036164">
    <property type="entry name" value="bL21-like_sf"/>
</dbReference>
<dbReference type="InterPro" id="IPR001787">
    <property type="entry name" value="Ribosomal_bL21"/>
</dbReference>
<dbReference type="InterPro" id="IPR018258">
    <property type="entry name" value="Ribosomal_bL21_CS"/>
</dbReference>
<dbReference type="NCBIfam" id="TIGR00061">
    <property type="entry name" value="L21"/>
    <property type="match status" value="1"/>
</dbReference>
<dbReference type="PANTHER" id="PTHR21349">
    <property type="entry name" value="50S RIBOSOMAL PROTEIN L21"/>
    <property type="match status" value="1"/>
</dbReference>
<dbReference type="PANTHER" id="PTHR21349:SF0">
    <property type="entry name" value="LARGE RIBOSOMAL SUBUNIT PROTEIN BL21M"/>
    <property type="match status" value="1"/>
</dbReference>
<dbReference type="Pfam" id="PF00829">
    <property type="entry name" value="Ribosomal_L21p"/>
    <property type="match status" value="1"/>
</dbReference>
<dbReference type="SUPFAM" id="SSF141091">
    <property type="entry name" value="L21p-like"/>
    <property type="match status" value="1"/>
</dbReference>
<dbReference type="PROSITE" id="PS01169">
    <property type="entry name" value="RIBOSOMAL_L21"/>
    <property type="match status" value="1"/>
</dbReference>
<gene>
    <name evidence="1" type="primary">rplU</name>
    <name type="ordered locus">SEN3137</name>
</gene>
<accession>B5R0H7</accession>
<keyword id="KW-0687">Ribonucleoprotein</keyword>
<keyword id="KW-0689">Ribosomal protein</keyword>
<keyword id="KW-0694">RNA-binding</keyword>
<keyword id="KW-0699">rRNA-binding</keyword>